<organism>
    <name type="scientific">Geobacillus kaustophilus (strain HTA426)</name>
    <dbReference type="NCBI Taxonomy" id="235909"/>
    <lineage>
        <taxon>Bacteria</taxon>
        <taxon>Bacillati</taxon>
        <taxon>Bacillota</taxon>
        <taxon>Bacilli</taxon>
        <taxon>Bacillales</taxon>
        <taxon>Anoxybacillaceae</taxon>
        <taxon>Geobacillus</taxon>
        <taxon>Geobacillus thermoleovorans group</taxon>
    </lineage>
</organism>
<reference key="1">
    <citation type="journal article" date="2004" name="Nucleic Acids Res.">
        <title>Thermoadaptation trait revealed by the genome sequence of thermophilic Geobacillus kaustophilus.</title>
        <authorList>
            <person name="Takami H."/>
            <person name="Takaki Y."/>
            <person name="Chee G.-J."/>
            <person name="Nishi S."/>
            <person name="Shimamura S."/>
            <person name="Suzuki H."/>
            <person name="Matsui S."/>
            <person name="Uchiyama I."/>
        </authorList>
    </citation>
    <scope>NUCLEOTIDE SEQUENCE [LARGE SCALE GENOMIC DNA]</scope>
    <source>
        <strain>HTA426</strain>
    </source>
</reference>
<proteinExistence type="inferred from homology"/>
<sequence>MIPGEYRLREEPIVCNRQKSATKLTVVNRGDRPVQVGSHFHFFEVNSFLEFDRQAAYGKHLNIPAGTAVRFEPGDAKQVELVPFSGERRVYGLNNMVNGPLDGNGKGGVRE</sequence>
<gene>
    <name evidence="1" type="primary">ureB</name>
    <name type="ordered locus">GK1931</name>
</gene>
<accession>Q5KYM0</accession>
<evidence type="ECO:0000255" key="1">
    <source>
        <dbReference type="HAMAP-Rule" id="MF_01954"/>
    </source>
</evidence>
<protein>
    <recommendedName>
        <fullName evidence="1">Urease subunit beta</fullName>
        <ecNumber evidence="1">3.5.1.5</ecNumber>
    </recommendedName>
    <alternativeName>
        <fullName evidence="1">Urea amidohydrolase subunit beta</fullName>
    </alternativeName>
</protein>
<keyword id="KW-0963">Cytoplasm</keyword>
<keyword id="KW-0378">Hydrolase</keyword>
<keyword id="KW-1185">Reference proteome</keyword>
<name>URE2_GEOKA</name>
<feature type="chain" id="PRO_0000234249" description="Urease subunit beta">
    <location>
        <begin position="1"/>
        <end position="111"/>
    </location>
</feature>
<dbReference type="EC" id="3.5.1.5" evidence="1"/>
<dbReference type="EMBL" id="BA000043">
    <property type="protein sequence ID" value="BAD76216.1"/>
    <property type="molecule type" value="Genomic_DNA"/>
</dbReference>
<dbReference type="RefSeq" id="WP_011231417.1">
    <property type="nucleotide sequence ID" value="NC_006510.1"/>
</dbReference>
<dbReference type="SMR" id="Q5KYM0"/>
<dbReference type="STRING" id="235909.GK1931"/>
<dbReference type="KEGG" id="gka:GK1931"/>
<dbReference type="PATRIC" id="fig|235909.7.peg.2072"/>
<dbReference type="eggNOG" id="COG0832">
    <property type="taxonomic scope" value="Bacteria"/>
</dbReference>
<dbReference type="HOGENOM" id="CLU_129707_1_1_9"/>
<dbReference type="UniPathway" id="UPA00258">
    <property type="reaction ID" value="UER00370"/>
</dbReference>
<dbReference type="Proteomes" id="UP000001172">
    <property type="component" value="Chromosome"/>
</dbReference>
<dbReference type="GO" id="GO:0035550">
    <property type="term" value="C:urease complex"/>
    <property type="evidence" value="ECO:0007669"/>
    <property type="project" value="InterPro"/>
</dbReference>
<dbReference type="GO" id="GO:0009039">
    <property type="term" value="F:urease activity"/>
    <property type="evidence" value="ECO:0007669"/>
    <property type="project" value="UniProtKB-UniRule"/>
</dbReference>
<dbReference type="GO" id="GO:0043419">
    <property type="term" value="P:urea catabolic process"/>
    <property type="evidence" value="ECO:0007669"/>
    <property type="project" value="UniProtKB-UniRule"/>
</dbReference>
<dbReference type="CDD" id="cd00407">
    <property type="entry name" value="Urease_beta"/>
    <property type="match status" value="1"/>
</dbReference>
<dbReference type="FunFam" id="2.10.150.10:FF:000001">
    <property type="entry name" value="Urease subunit beta"/>
    <property type="match status" value="1"/>
</dbReference>
<dbReference type="Gene3D" id="2.10.150.10">
    <property type="entry name" value="Urease, beta subunit"/>
    <property type="match status" value="1"/>
</dbReference>
<dbReference type="HAMAP" id="MF_01954">
    <property type="entry name" value="Urease_beta"/>
    <property type="match status" value="1"/>
</dbReference>
<dbReference type="InterPro" id="IPR002019">
    <property type="entry name" value="Urease_beta-like"/>
</dbReference>
<dbReference type="InterPro" id="IPR036461">
    <property type="entry name" value="Urease_betasu_sf"/>
</dbReference>
<dbReference type="InterPro" id="IPR050069">
    <property type="entry name" value="Urease_subunit"/>
</dbReference>
<dbReference type="NCBIfam" id="NF009682">
    <property type="entry name" value="PRK13203.1"/>
    <property type="match status" value="1"/>
</dbReference>
<dbReference type="NCBIfam" id="TIGR00192">
    <property type="entry name" value="urease_beta"/>
    <property type="match status" value="1"/>
</dbReference>
<dbReference type="PANTHER" id="PTHR33569">
    <property type="entry name" value="UREASE"/>
    <property type="match status" value="1"/>
</dbReference>
<dbReference type="PANTHER" id="PTHR33569:SF1">
    <property type="entry name" value="UREASE"/>
    <property type="match status" value="1"/>
</dbReference>
<dbReference type="Pfam" id="PF00699">
    <property type="entry name" value="Urease_beta"/>
    <property type="match status" value="1"/>
</dbReference>
<dbReference type="SUPFAM" id="SSF51278">
    <property type="entry name" value="Urease, beta-subunit"/>
    <property type="match status" value="1"/>
</dbReference>
<comment type="catalytic activity">
    <reaction evidence="1">
        <text>urea + 2 H2O + H(+) = hydrogencarbonate + 2 NH4(+)</text>
        <dbReference type="Rhea" id="RHEA:20557"/>
        <dbReference type="ChEBI" id="CHEBI:15377"/>
        <dbReference type="ChEBI" id="CHEBI:15378"/>
        <dbReference type="ChEBI" id="CHEBI:16199"/>
        <dbReference type="ChEBI" id="CHEBI:17544"/>
        <dbReference type="ChEBI" id="CHEBI:28938"/>
        <dbReference type="EC" id="3.5.1.5"/>
    </reaction>
</comment>
<comment type="pathway">
    <text evidence="1">Nitrogen metabolism; urea degradation; CO(2) and NH(3) from urea (urease route): step 1/1.</text>
</comment>
<comment type="subunit">
    <text evidence="1">Heterotrimer of UreA (gamma), UreB (beta) and UreC (alpha) subunits. Three heterotrimers associate to form the active enzyme.</text>
</comment>
<comment type="subcellular location">
    <subcellularLocation>
        <location evidence="1">Cytoplasm</location>
    </subcellularLocation>
</comment>
<comment type="similarity">
    <text evidence="1">Belongs to the urease beta subunit family.</text>
</comment>